<gene>
    <name type="primary">por</name>
</gene>
<evidence type="ECO:0000305" key="1"/>
<dbReference type="EMBL" id="X65533">
    <property type="protein sequence ID" value="CAA46503.1"/>
    <property type="molecule type" value="Genomic_DNA"/>
</dbReference>
<dbReference type="PIR" id="S21405">
    <property type="entry name" value="S21405"/>
</dbReference>
<dbReference type="SMR" id="P30691"/>
<dbReference type="STRING" id="486.B2G52_04140"/>
<dbReference type="GO" id="GO:0009279">
    <property type="term" value="C:cell outer membrane"/>
    <property type="evidence" value="ECO:0007669"/>
    <property type="project" value="UniProtKB-SubCell"/>
</dbReference>
<dbReference type="GO" id="GO:0046930">
    <property type="term" value="C:pore complex"/>
    <property type="evidence" value="ECO:0007669"/>
    <property type="project" value="UniProtKB-KW"/>
</dbReference>
<dbReference type="GO" id="GO:0015288">
    <property type="term" value="F:porin activity"/>
    <property type="evidence" value="ECO:0007669"/>
    <property type="project" value="UniProtKB-KW"/>
</dbReference>
<dbReference type="GO" id="GO:0034220">
    <property type="term" value="P:monoatomic ion transmembrane transport"/>
    <property type="evidence" value="ECO:0007669"/>
    <property type="project" value="InterPro"/>
</dbReference>
<dbReference type="CDD" id="cd00342">
    <property type="entry name" value="gram_neg_porins"/>
    <property type="match status" value="1"/>
</dbReference>
<dbReference type="Gene3D" id="2.40.160.10">
    <property type="entry name" value="Porin"/>
    <property type="match status" value="1"/>
</dbReference>
<dbReference type="InterPro" id="IPR050298">
    <property type="entry name" value="Gram-neg_bact_OMP"/>
</dbReference>
<dbReference type="InterPro" id="IPR033900">
    <property type="entry name" value="Gram_neg_porin_domain"/>
</dbReference>
<dbReference type="InterPro" id="IPR023614">
    <property type="entry name" value="Porin_dom_sf"/>
</dbReference>
<dbReference type="InterPro" id="IPR001702">
    <property type="entry name" value="Porin_Gram-ve"/>
</dbReference>
<dbReference type="InterPro" id="IPR013793">
    <property type="entry name" value="Porin_Gram-ve_CS"/>
</dbReference>
<dbReference type="InterPro" id="IPR002299">
    <property type="entry name" value="Porin_Neis"/>
</dbReference>
<dbReference type="NCBIfam" id="NF040479">
    <property type="entry name" value="porin_porB_Neis"/>
    <property type="match status" value="1"/>
</dbReference>
<dbReference type="PANTHER" id="PTHR34501:SF9">
    <property type="entry name" value="MAJOR OUTER MEMBRANE PROTEIN P.IA"/>
    <property type="match status" value="1"/>
</dbReference>
<dbReference type="PANTHER" id="PTHR34501">
    <property type="entry name" value="PROTEIN YDDL-RELATED"/>
    <property type="match status" value="1"/>
</dbReference>
<dbReference type="Pfam" id="PF00267">
    <property type="entry name" value="Porin_1"/>
    <property type="match status" value="1"/>
</dbReference>
<dbReference type="PRINTS" id="PR00182">
    <property type="entry name" value="ECOLNEIPORIN"/>
</dbReference>
<dbReference type="PRINTS" id="PR00184">
    <property type="entry name" value="NEISSPPORIN"/>
</dbReference>
<dbReference type="SUPFAM" id="SSF56935">
    <property type="entry name" value="Porins"/>
    <property type="match status" value="1"/>
</dbReference>
<dbReference type="PROSITE" id="PS00576">
    <property type="entry name" value="GRAM_NEG_PORIN"/>
    <property type="match status" value="1"/>
</dbReference>
<feature type="signal peptide">
    <location>
        <begin position="1"/>
        <end position="19"/>
    </location>
</feature>
<feature type="chain" id="PRO_0000025285" description="Major outer membrane protein P.IB">
    <location>
        <begin position="20"/>
        <end position="337"/>
    </location>
</feature>
<proteinExistence type="inferred from homology"/>
<comment type="function">
    <text>Serves as a slightly cation selective porin.</text>
</comment>
<comment type="subunit">
    <text>Homotrimer.</text>
</comment>
<comment type="subcellular location">
    <subcellularLocation>
        <location>Cell outer membrane</location>
        <topology>Multi-pass membrane protein</topology>
    </subcellularLocation>
</comment>
<comment type="similarity">
    <text evidence="1">Belongs to the Gram-negative porin family.</text>
</comment>
<protein>
    <recommendedName>
        <fullName>Major outer membrane protein P.IB</fullName>
        <shortName>PIB</shortName>
        <shortName>Protein IB</shortName>
    </recommendedName>
    <alternativeName>
        <fullName>Porin</fullName>
    </alternativeName>
</protein>
<sequence length="337" mass="35710">MKKSLIALTLAALPVAAMADVTLYGTIKAGVETYRTVKHTDGKVTEVKTGSEIADFGSKIGFKGQEDFGNGLKAIWQLEQSASIAGTNSGWGNKQSFIGLKGGFGTVRAGNLNSILKSTGDNVNAWESGKATEDVLQVSKISAPEHRYASVRYDSPEFAGFSGSVQYAPKDNSGANGESYHVGLNYQNSGFFAQYAGLFQRHGEGTKATVGEPVEKLQVHRLVGGYDNDALYASVAVQQQDAKLAAAPNSHNSQTEVAATVAYRFGNVTPRVSYAHGFKGTVAKADGDNRYDQVVVGAEYDFSKRTSALVSAGWLQEGKGAGKTVSTASTVGLRHKF</sequence>
<accession>P30691</accession>
<name>OMPB_NEILA</name>
<organism>
    <name type="scientific">Neisseria lactamica</name>
    <dbReference type="NCBI Taxonomy" id="486"/>
    <lineage>
        <taxon>Bacteria</taxon>
        <taxon>Pseudomonadati</taxon>
        <taxon>Pseudomonadota</taxon>
        <taxon>Betaproteobacteria</taxon>
        <taxon>Neisseriales</taxon>
        <taxon>Neisseriaceae</taxon>
        <taxon>Neisseria</taxon>
    </lineage>
</organism>
<reference key="1">
    <citation type="journal article" date="1992" name="FEMS Microbiol. Lett.">
        <title>Sequence analysis and relationships between meningococcal class 3 serotype proteins and other porins from pathogenic and non-pathogenic Neisseria species.</title>
        <authorList>
            <person name="Ward M.J."/>
            <person name="Lambden P.R."/>
            <person name="Heckels J.E."/>
        </authorList>
    </citation>
    <scope>NUCLEOTIDE SEQUENCE [GENOMIC DNA]</scope>
    <source>
        <strain>ATCC 23970 / DSM 4691 / CCUG 5853 / CIP 72.17 / NCTC 10617 / NCDC A7515</strain>
    </source>
</reference>
<keyword id="KW-0998">Cell outer membrane</keyword>
<keyword id="KW-0406">Ion transport</keyword>
<keyword id="KW-0472">Membrane</keyword>
<keyword id="KW-0626">Porin</keyword>
<keyword id="KW-0732">Signal</keyword>
<keyword id="KW-0812">Transmembrane</keyword>
<keyword id="KW-1134">Transmembrane beta strand</keyword>
<keyword id="KW-0813">Transport</keyword>